<evidence type="ECO:0000255" key="1"/>
<evidence type="ECO:0000269" key="2">
    <source>
    </source>
</evidence>
<evidence type="ECO:0000269" key="3">
    <source>
    </source>
</evidence>
<evidence type="ECO:0000269" key="4">
    <source>
    </source>
</evidence>
<evidence type="ECO:0000269" key="5">
    <source>
    </source>
</evidence>
<evidence type="ECO:0000269" key="6">
    <source>
    </source>
</evidence>
<evidence type="ECO:0000269" key="7">
    <source>
    </source>
</evidence>
<evidence type="ECO:0000269" key="8">
    <source>
    </source>
</evidence>
<evidence type="ECO:0000269" key="9">
    <source>
    </source>
</evidence>
<evidence type="ECO:0000269" key="10">
    <source>
    </source>
</evidence>
<evidence type="ECO:0000269" key="11">
    <source>
    </source>
</evidence>
<evidence type="ECO:0000305" key="12"/>
<evidence type="ECO:0000312" key="13">
    <source>
        <dbReference type="EMBL" id="BAC76458.1"/>
    </source>
</evidence>
<evidence type="ECO:0000312" key="14">
    <source>
        <dbReference type="PDB" id="1VFI"/>
    </source>
</evidence>
<evidence type="ECO:0007829" key="15">
    <source>
        <dbReference type="PDB" id="1VFI"/>
    </source>
</evidence>
<organism>
    <name type="scientific">Ascidia sydneiensis samea</name>
    <name type="common">Vanadium-rich ascidian</name>
    <dbReference type="NCBI Taxonomy" id="79730"/>
    <lineage>
        <taxon>Eukaryota</taxon>
        <taxon>Metazoa</taxon>
        <taxon>Chordata</taxon>
        <taxon>Tunicata</taxon>
        <taxon>Ascidiacea</taxon>
        <taxon>Phlebobranchia</taxon>
        <taxon>Ascidiidae</taxon>
        <taxon>Ascidia</taxon>
    </lineage>
</organism>
<comment type="function">
    <text evidence="2 3 4 6 9 10">Acts as a vanadium reductase which may form an electron transfer cascade in conjunction with NADPH and glutathione through thiol disulfide exchange reactions. Partial cleavage of its disulfide bonds results in the reduction of V(5+) to V(4+). Binds up to 24 V(4+) ions per protein at pH 7.5. Also binds Fe(3+) and Cu(2+) and, to a lesser extent, Co(2+), Zn(2+) and Ni(2+).</text>
</comment>
<comment type="subunit">
    <text evidence="8 12">Interacts with VIP1.</text>
</comment>
<comment type="interaction">
    <interactant intactId="EBI-2892020">
        <id>Q86BW2</id>
    </interactant>
    <interactant intactId="EBI-2892029">
        <id>A4F2K9</id>
        <label>VIP1</label>
    </interactant>
    <organismsDiffer>false</organismsDiffer>
    <experiments>3</experiments>
</comment>
<comment type="subcellular location">
    <subcellularLocation>
        <location evidence="7">Cytoplasm</location>
    </subcellularLocation>
</comment>
<comment type="tissue specificity">
    <text evidence="7">Expressed in vanadocytes.</text>
</comment>
<comment type="mass spectrometry"/>
<keyword id="KW-0002">3D-structure</keyword>
<keyword id="KW-0963">Cytoplasm</keyword>
<keyword id="KW-0903">Direct protein sequencing</keyword>
<keyword id="KW-1015">Disulfide bond</keyword>
<keyword id="KW-0479">Metal-binding</keyword>
<keyword id="KW-0560">Oxidoreductase</keyword>
<keyword id="KW-0732">Signal</keyword>
<proteinExistence type="evidence at protein level"/>
<sequence>MSKVIFALVLVVVLVACINATYVEFEEAYAPVDCKGQCTTPCEPLTACKEKCAESCETSADKKTCRRNCKKADCEPQDKVCDACRMKCHKACRAANCASECPKHEHKSDTCRACMKTNCK</sequence>
<gene>
    <name evidence="13" type="primary">VANABIN2</name>
</gene>
<reference evidence="12 13" key="1">
    <citation type="journal article" date="2003" name="Biochim. Biophys. Acta">
        <title>Vanadium-binding proteins (vanabins) from a vanadium-rich ascidian Ascidia sydneiensis samea.</title>
        <authorList>
            <person name="Ueki T."/>
            <person name="Adachi T."/>
            <person name="Kawano S."/>
            <person name="Aoshima M."/>
            <person name="Yamaguchi N."/>
            <person name="Kanamori K."/>
            <person name="Michibata H."/>
        </authorList>
    </citation>
    <scope>NUCLEOTIDE SEQUENCE [MRNA]</scope>
    <scope>PROTEIN SEQUENCE OF 30-49</scope>
    <scope>FUNCTION</scope>
    <source>
        <tissue evidence="13">Blood</tissue>
    </source>
</reference>
<reference evidence="12" key="2">
    <citation type="journal article" date="2008" name="Biochim. Biophys. Acta">
        <title>Sequence variation of Vanabin2-like vanadium-binding proteins in blood cells of the vanadium-accumulating ascidian Ascidia sydneiensis samea.</title>
        <authorList>
            <person name="Ueki T."/>
            <person name="Satake M."/>
            <person name="Kamino K."/>
            <person name="Michibata H."/>
        </authorList>
    </citation>
    <scope>PROTEIN SEQUENCE OF 30-41</scope>
    <scope>FUNCTION</scope>
</reference>
<reference evidence="12" key="3">
    <citation type="journal article" date="2003" name="Appl. Environ. Microbiol.">
        <title>Bioaccumulation of copper ions by Escherichia coli expressing vanabin genes from the vanadium-rich ascidian Ascidia sydneiensis samea.</title>
        <authorList>
            <person name="Ueki T."/>
            <person name="Sakamoto Y."/>
            <person name="Yamaguchi N."/>
            <person name="Michibata H."/>
        </authorList>
    </citation>
    <scope>FUNCTION</scope>
</reference>
<reference evidence="12" key="4">
    <citation type="journal article" date="2003" name="J. Am. Chem. Soc.">
        <title>Vanadium-binding protein in a vanadium-rich ascidian Ascidia sydneiensis samea: CW and pulsed EPR studies.</title>
        <authorList>
            <person name="Fukui K."/>
            <person name="Ueki T."/>
            <person name="Ohya H."/>
            <person name="Michibata H."/>
        </authorList>
    </citation>
    <scope>FUNCTION</scope>
</reference>
<reference evidence="12" key="5">
    <citation type="journal article" date="2006" name="Biochim. Biophys. Acta">
        <title>Selective metal binding by Vanabin2 from the vanadium-rich ascidian, Ascidia sydneiensis samea.</title>
        <authorList>
            <person name="Kawakami N."/>
            <person name="Ueki T."/>
            <person name="Matsuo K."/>
            <person name="Gekko K."/>
            <person name="Michibata H."/>
        </authorList>
    </citation>
    <scope>FUNCTION</scope>
</reference>
<reference evidence="12" key="6">
    <citation type="journal article" date="2006" name="Zool. Sci.">
        <title>Localization of vanabins, vanadium-binding proteins, in the blood cells of the vanadium-rich ascidian, Ascidia sydneiensis samea.</title>
        <authorList>
            <person name="Yamaguchi N."/>
            <person name="Amakawa Y."/>
            <person name="Yamada H."/>
            <person name="Ueki T."/>
            <person name="Michibata H."/>
        </authorList>
    </citation>
    <scope>TISSUE SPECIFICITY</scope>
    <scope>SUBCELLULAR LOCATION</scope>
</reference>
<reference evidence="12" key="7">
    <citation type="journal article" date="2007" name="Biochim. Biophys. Acta">
        <title>Identification of Vanabin-interacting protein 1 (VIP1) from blood cells of the vanadium-rich ascidian Ascidia sydneiensis samea.</title>
        <authorList>
            <person name="Ueki T."/>
            <person name="Shintaku K."/>
            <person name="Yonekawa Y."/>
            <person name="Takatsu N."/>
            <person name="Yamada H."/>
            <person name="Hamada T."/>
            <person name="Hirota H."/>
            <person name="Michibata H."/>
        </authorList>
    </citation>
    <scope>INTERACTION WITH VIP1</scope>
</reference>
<reference evidence="12" key="8">
    <citation type="journal article" date="2009" name="Biochim. Biophys. Acta">
        <title>Characterization of vanadium-binding sites of the vanadium-binding protein Vanabin2 by site-directed mutagenesis.</title>
        <authorList>
            <person name="Ueki T."/>
            <person name="Kawakami N."/>
            <person name="Toshishige M."/>
            <person name="Matsuo K."/>
            <person name="Gekko K."/>
            <person name="Michibata H."/>
        </authorList>
    </citation>
    <scope>MUTAGENESIS OF LYS-35; LYS-49; LYS-63; ARG-66; ARG-67; ARG-85; HIS-89; HIS-104; HIS-106; LYS-107; ARG-112; LYS-116 AND LYS-120</scope>
</reference>
<reference evidence="12" key="9">
    <citation type="journal article" date="2009" name="Biochim. Biophys. Acta">
        <title>A novel vanadium reductase, Vanabin2, forms a possible cascade involved in electron transfer.</title>
        <authorList>
            <person name="Kawakami N."/>
            <person name="Ueki T."/>
            <person name="Amata Y."/>
            <person name="Kanamori K."/>
            <person name="Matsuo K."/>
            <person name="Gekko K."/>
            <person name="Michibata H."/>
        </authorList>
    </citation>
    <scope>FUNCTION</scope>
</reference>
<reference evidence="12 14" key="10">
    <citation type="journal article" date="2005" name="J. Am. Chem. Soc.">
        <title>Solution structure of Vanabin2, a vanadium(IV)-binding protein from the vanadium-rich ascidian Ascidia sydneiensis samea.</title>
        <authorList>
            <person name="Hamada T."/>
            <person name="Asanuma M."/>
            <person name="Ueki T."/>
            <person name="Hayashi F."/>
            <person name="Kobayashi N."/>
            <person name="Yokoyama S."/>
            <person name="Michibata H."/>
            <person name="Hirota H."/>
        </authorList>
    </citation>
    <scope>STRUCTURE BY NMR OF 30-120</scope>
    <scope>MASS SPECTROMETRY</scope>
    <scope>DISULFIDE BONDS</scope>
</reference>
<accession>Q86BW2</accession>
<feature type="signal peptide" evidence="1">
    <location>
        <begin position="1"/>
        <end position="20"/>
    </location>
</feature>
<feature type="propeptide" id="PRO_0000397931" evidence="1 2 9">
    <location>
        <begin position="21"/>
        <end position="29"/>
    </location>
</feature>
<feature type="chain" id="PRO_0000397932" description="Vanadium-binding protein 2" evidence="2">
    <location>
        <begin position="30"/>
        <end position="120"/>
    </location>
</feature>
<feature type="disulfide bond" evidence="5">
    <location>
        <begin position="34"/>
        <end position="88"/>
    </location>
</feature>
<feature type="disulfide bond" evidence="5">
    <location>
        <begin position="38"/>
        <end position="84"/>
    </location>
</feature>
<feature type="disulfide bond" evidence="5">
    <location>
        <begin position="42"/>
        <end position="81"/>
    </location>
</feature>
<feature type="disulfide bond" evidence="5">
    <location>
        <begin position="48"/>
        <end position="74"/>
    </location>
</feature>
<feature type="disulfide bond" evidence="5">
    <location>
        <begin position="52"/>
        <end position="69"/>
    </location>
</feature>
<feature type="disulfide bond" evidence="5">
    <location>
        <begin position="56"/>
        <end position="65"/>
    </location>
</feature>
<feature type="disulfide bond" evidence="5">
    <location>
        <begin position="92"/>
        <end position="119"/>
    </location>
</feature>
<feature type="disulfide bond" evidence="5">
    <location>
        <begin position="97"/>
        <end position="114"/>
    </location>
</feature>
<feature type="disulfide bond" evidence="5">
    <location>
        <begin position="101"/>
        <end position="111"/>
    </location>
</feature>
<feature type="mutagenesis site" description="Loss of VO(2+) binding; when associated with A-85." evidence="11">
    <original>K</original>
    <variation>A</variation>
    <location>
        <position position="35"/>
    </location>
</feature>
<feature type="mutagenesis site" description="Slightly reduced VO(2+) binding. Reduced VO(2+) binding; when associated with A-63. Loss of VO(2+) binding; when associated with A-63; A-66 and A-67." evidence="11">
    <original>K</original>
    <variation>A</variation>
    <location>
        <position position="49"/>
    </location>
</feature>
<feature type="mutagenesis site" description="Slightly reduced VO(2+) binding. Reduced VO(2+) binding; when associated with A-49. Loss of VO(2+) binding; when associated with A-49; A-66 and A-67." evidence="11">
    <original>K</original>
    <variation>A</variation>
    <location>
        <position position="63"/>
    </location>
</feature>
<feature type="mutagenesis site" description="Loss of VO(2+) binding; when associated with A-49; A-63 and A-67." evidence="11">
    <original>R</original>
    <variation>A</variation>
    <location>
        <position position="66"/>
    </location>
</feature>
<feature type="mutagenesis site" description="Loss of VO(2+) binding; when associated with A-49; A-63 and A-66." evidence="11">
    <original>R</original>
    <variation>A</variation>
    <location>
        <position position="67"/>
    </location>
</feature>
<feature type="mutagenesis site" description="Loss of VO(2+) binding; when associated with A-35." evidence="11">
    <original>R</original>
    <variation>A</variation>
    <location>
        <position position="85"/>
    </location>
</feature>
<feature type="mutagenesis site" description="Loss of Co(2+) and Zn(2+) binding and reduced Cu(2+) binding; when associated with A-104 and A-106." evidence="11">
    <original>H</original>
    <variation>A</variation>
    <location>
        <position position="89"/>
    </location>
</feature>
<feature type="mutagenesis site" description="Loss of Co(2+) and Zn(2+) binding and reduced Cu(2+) binding; when associated with A-89 and A-106." evidence="11">
    <original>H</original>
    <variation>A</variation>
    <location>
        <position position="104"/>
    </location>
</feature>
<feature type="mutagenesis site" description="Loss of Co(2+) and Zn(2+) binding and reduced Cu(2+) binding; when associated with A-89 and A-104." evidence="11">
    <original>H</original>
    <variation>A</variation>
    <location>
        <position position="106"/>
    </location>
</feature>
<feature type="mutagenesis site" description="Loss of VO(2+) binding; when associated A-112; A-116 and A-120." evidence="11">
    <original>K</original>
    <variation>A</variation>
    <location>
        <position position="107"/>
    </location>
</feature>
<feature type="mutagenesis site" description="Loss of VO(2+) binding; when associated A-107; A-116 and A-120." evidence="11">
    <original>R</original>
    <variation>A</variation>
    <location>
        <position position="112"/>
    </location>
</feature>
<feature type="mutagenesis site" description="Reduced VO(2+) binding; when associated with A-120. Loss of VO(2+) binding; when associated A-107; A-112 and A-120." evidence="11">
    <original>K</original>
    <variation>A</variation>
    <location>
        <position position="116"/>
    </location>
</feature>
<feature type="mutagenesis site" description="Reduced VO(2+) binding; when associated with A-116. Loss of VO(2+) binding; when associated A-107; A-112 and A-116." evidence="11">
    <original>K</original>
    <variation>A</variation>
    <location>
        <position position="120"/>
    </location>
</feature>
<feature type="strand" evidence="15">
    <location>
        <begin position="34"/>
        <end position="37"/>
    </location>
</feature>
<feature type="helix" evidence="15">
    <location>
        <begin position="43"/>
        <end position="55"/>
    </location>
</feature>
<feature type="turn" evidence="15">
    <location>
        <begin position="56"/>
        <end position="58"/>
    </location>
</feature>
<feature type="helix" evidence="15">
    <location>
        <begin position="62"/>
        <end position="73"/>
    </location>
</feature>
<feature type="helix" evidence="15">
    <location>
        <begin position="75"/>
        <end position="95"/>
    </location>
</feature>
<feature type="strand" evidence="15">
    <location>
        <begin position="98"/>
        <end position="101"/>
    </location>
</feature>
<feature type="helix" evidence="15">
    <location>
        <begin position="109"/>
        <end position="117"/>
    </location>
</feature>
<protein>
    <recommendedName>
        <fullName evidence="13">Vanadium-binding protein 2</fullName>
        <ecNumber>1.13.-.-</ecNumber>
    </recommendedName>
</protein>
<dbReference type="EC" id="1.13.-.-"/>
<dbReference type="EMBL" id="AB088204">
    <property type="protein sequence ID" value="BAC76458.1"/>
    <property type="molecule type" value="mRNA"/>
</dbReference>
<dbReference type="PDB" id="1VFI">
    <property type="method" value="NMR"/>
    <property type="chains" value="A=30-120"/>
</dbReference>
<dbReference type="PDBsum" id="1VFI"/>
<dbReference type="SMR" id="Q86BW2"/>
<dbReference type="IntAct" id="Q86BW2">
    <property type="interactions" value="2"/>
</dbReference>
<dbReference type="EvolutionaryTrace" id="Q86BW2"/>
<dbReference type="GO" id="GO:0005737">
    <property type="term" value="C:cytoplasm"/>
    <property type="evidence" value="ECO:0007669"/>
    <property type="project" value="UniProtKB-SubCell"/>
</dbReference>
<dbReference type="GO" id="GO:0046872">
    <property type="term" value="F:metal ion binding"/>
    <property type="evidence" value="ECO:0007669"/>
    <property type="project" value="UniProtKB-KW"/>
</dbReference>
<dbReference type="GO" id="GO:0016491">
    <property type="term" value="F:oxidoreductase activity"/>
    <property type="evidence" value="ECO:0007669"/>
    <property type="project" value="UniProtKB-KW"/>
</dbReference>
<dbReference type="Gene3D" id="1.10.246.100">
    <property type="entry name" value="Vanadium-binding protein 2"/>
    <property type="match status" value="1"/>
</dbReference>
<dbReference type="InterPro" id="IPR021544">
    <property type="entry name" value="Vanabin-2"/>
</dbReference>
<dbReference type="InterPro" id="IPR037242">
    <property type="entry name" value="Vanabin-2_sf"/>
</dbReference>
<dbReference type="Pfam" id="PF11437">
    <property type="entry name" value="Vanabin-2"/>
    <property type="match status" value="1"/>
</dbReference>
<dbReference type="SUPFAM" id="SSF144129">
    <property type="entry name" value="Vanabin-like"/>
    <property type="match status" value="1"/>
</dbReference>
<name>VBP2_ASCSS</name>